<name>RS14_BLOPB</name>
<dbReference type="EMBL" id="CP000016">
    <property type="protein sequence ID" value="AAZ40845.1"/>
    <property type="molecule type" value="Genomic_DNA"/>
</dbReference>
<dbReference type="RefSeq" id="WP_011282752.1">
    <property type="nucleotide sequence ID" value="NC_007292.1"/>
</dbReference>
<dbReference type="SMR" id="Q493J5"/>
<dbReference type="STRING" id="291272.BPEN_211"/>
<dbReference type="KEGG" id="bpn:BPEN_211"/>
<dbReference type="eggNOG" id="COG0199">
    <property type="taxonomic scope" value="Bacteria"/>
</dbReference>
<dbReference type="HOGENOM" id="CLU_139869_0_1_6"/>
<dbReference type="OrthoDB" id="9810484at2"/>
<dbReference type="Proteomes" id="UP000007794">
    <property type="component" value="Chromosome"/>
</dbReference>
<dbReference type="GO" id="GO:0005737">
    <property type="term" value="C:cytoplasm"/>
    <property type="evidence" value="ECO:0007669"/>
    <property type="project" value="UniProtKB-ARBA"/>
</dbReference>
<dbReference type="GO" id="GO:0015935">
    <property type="term" value="C:small ribosomal subunit"/>
    <property type="evidence" value="ECO:0007669"/>
    <property type="project" value="TreeGrafter"/>
</dbReference>
<dbReference type="GO" id="GO:0019843">
    <property type="term" value="F:rRNA binding"/>
    <property type="evidence" value="ECO:0007669"/>
    <property type="project" value="UniProtKB-UniRule"/>
</dbReference>
<dbReference type="GO" id="GO:0003735">
    <property type="term" value="F:structural constituent of ribosome"/>
    <property type="evidence" value="ECO:0007669"/>
    <property type="project" value="InterPro"/>
</dbReference>
<dbReference type="GO" id="GO:0006412">
    <property type="term" value="P:translation"/>
    <property type="evidence" value="ECO:0007669"/>
    <property type="project" value="UniProtKB-UniRule"/>
</dbReference>
<dbReference type="FunFam" id="1.10.287.1480:FF:000001">
    <property type="entry name" value="30S ribosomal protein S14"/>
    <property type="match status" value="1"/>
</dbReference>
<dbReference type="Gene3D" id="1.10.287.1480">
    <property type="match status" value="1"/>
</dbReference>
<dbReference type="HAMAP" id="MF_00537">
    <property type="entry name" value="Ribosomal_uS14_1"/>
    <property type="match status" value="1"/>
</dbReference>
<dbReference type="InterPro" id="IPR001209">
    <property type="entry name" value="Ribosomal_uS14"/>
</dbReference>
<dbReference type="InterPro" id="IPR023036">
    <property type="entry name" value="Ribosomal_uS14_bac/plastid"/>
</dbReference>
<dbReference type="InterPro" id="IPR018271">
    <property type="entry name" value="Ribosomal_uS14_CS"/>
</dbReference>
<dbReference type="NCBIfam" id="NF006477">
    <property type="entry name" value="PRK08881.1"/>
    <property type="match status" value="1"/>
</dbReference>
<dbReference type="PANTHER" id="PTHR19836">
    <property type="entry name" value="30S RIBOSOMAL PROTEIN S14"/>
    <property type="match status" value="1"/>
</dbReference>
<dbReference type="PANTHER" id="PTHR19836:SF19">
    <property type="entry name" value="SMALL RIBOSOMAL SUBUNIT PROTEIN US14M"/>
    <property type="match status" value="1"/>
</dbReference>
<dbReference type="Pfam" id="PF00253">
    <property type="entry name" value="Ribosomal_S14"/>
    <property type="match status" value="1"/>
</dbReference>
<dbReference type="SUPFAM" id="SSF57716">
    <property type="entry name" value="Glucocorticoid receptor-like (DNA-binding domain)"/>
    <property type="match status" value="1"/>
</dbReference>
<dbReference type="PROSITE" id="PS00527">
    <property type="entry name" value="RIBOSOMAL_S14"/>
    <property type="match status" value="1"/>
</dbReference>
<organism>
    <name type="scientific">Blochmanniella pennsylvanica (strain BPEN)</name>
    <dbReference type="NCBI Taxonomy" id="291272"/>
    <lineage>
        <taxon>Bacteria</taxon>
        <taxon>Pseudomonadati</taxon>
        <taxon>Pseudomonadota</taxon>
        <taxon>Gammaproteobacteria</taxon>
        <taxon>Enterobacterales</taxon>
        <taxon>Enterobacteriaceae</taxon>
        <taxon>ant endosymbionts</taxon>
        <taxon>Candidatus Blochmanniella</taxon>
    </lineage>
</organism>
<accession>Q493J5</accession>
<feature type="chain" id="PRO_1000128312" description="Small ribosomal subunit protein uS14">
    <location>
        <begin position="1"/>
        <end position="101"/>
    </location>
</feature>
<sequence length="101" mass="12068">MTKESIKAREIKRLKLVNKYYTQRISLKKIIIDQRIPNEERWNAVLKLQTLPRDSSPSRRRNRCRHTGRPHAFLRKFGLSRMKVREAAMRGEIPGLRKASW</sequence>
<gene>
    <name evidence="1" type="primary">rpsN</name>
    <name type="ordered locus">BPEN_211</name>
</gene>
<evidence type="ECO:0000255" key="1">
    <source>
        <dbReference type="HAMAP-Rule" id="MF_00537"/>
    </source>
</evidence>
<evidence type="ECO:0000305" key="2"/>
<reference key="1">
    <citation type="journal article" date="2005" name="Genome Res.">
        <title>Genome sequence of Blochmannia pennsylvanicus indicates parallel evolutionary trends among bacterial mutualists of insects.</title>
        <authorList>
            <person name="Degnan P.H."/>
            <person name="Lazarus A.B."/>
            <person name="Wernegreen J.J."/>
        </authorList>
    </citation>
    <scope>NUCLEOTIDE SEQUENCE [LARGE SCALE GENOMIC DNA]</scope>
    <source>
        <strain>BPEN</strain>
    </source>
</reference>
<proteinExistence type="inferred from homology"/>
<protein>
    <recommendedName>
        <fullName evidence="1">Small ribosomal subunit protein uS14</fullName>
    </recommendedName>
    <alternativeName>
        <fullName evidence="2">30S ribosomal protein S14</fullName>
    </alternativeName>
</protein>
<comment type="function">
    <text evidence="1">Binds 16S rRNA, required for the assembly of 30S particles and may also be responsible for determining the conformation of the 16S rRNA at the A site.</text>
</comment>
<comment type="subunit">
    <text evidence="1">Part of the 30S ribosomal subunit. Contacts proteins S3 and S10.</text>
</comment>
<comment type="similarity">
    <text evidence="1">Belongs to the universal ribosomal protein uS14 family.</text>
</comment>
<keyword id="KW-1185">Reference proteome</keyword>
<keyword id="KW-0687">Ribonucleoprotein</keyword>
<keyword id="KW-0689">Ribosomal protein</keyword>
<keyword id="KW-0694">RNA-binding</keyword>
<keyword id="KW-0699">rRNA-binding</keyword>